<feature type="chain" id="PRO_0000204794" description="Calponin-like protein clik-2">
    <location>
        <begin position="1"/>
        <end position="397"/>
    </location>
</feature>
<feature type="repeat" description="Calponin-like 1" evidence="1">
    <location>
        <begin position="29"/>
        <end position="54"/>
    </location>
</feature>
<feature type="repeat" description="Calponin-like 2" evidence="1">
    <location>
        <begin position="73"/>
        <end position="98"/>
    </location>
</feature>
<feature type="repeat" description="Calponin-like 3" evidence="1">
    <location>
        <begin position="119"/>
        <end position="144"/>
    </location>
</feature>
<feature type="repeat" description="Calponin-like 4" evidence="1">
    <location>
        <begin position="161"/>
        <end position="189"/>
    </location>
</feature>
<feature type="repeat" description="Calponin-like 5" evidence="1">
    <location>
        <begin position="209"/>
        <end position="234"/>
    </location>
</feature>
<feature type="repeat" description="Calponin-like 6" evidence="1">
    <location>
        <begin position="255"/>
        <end position="280"/>
    </location>
</feature>
<feature type="region of interest" description="Disordered" evidence="2">
    <location>
        <begin position="301"/>
        <end position="397"/>
    </location>
</feature>
<feature type="compositionally biased region" description="Basic and acidic residues" evidence="2">
    <location>
        <begin position="321"/>
        <end position="332"/>
    </location>
</feature>
<feature type="compositionally biased region" description="Acidic residues" evidence="2">
    <location>
        <begin position="344"/>
        <end position="360"/>
    </location>
</feature>
<feature type="compositionally biased region" description="Acidic residues" evidence="2">
    <location>
        <begin position="367"/>
        <end position="397"/>
    </location>
</feature>
<dbReference type="EMBL" id="FO080934">
    <property type="protein sequence ID" value="CCD67909.1"/>
    <property type="molecule type" value="Genomic_DNA"/>
</dbReference>
<dbReference type="PIR" id="T15827">
    <property type="entry name" value="T15827"/>
</dbReference>
<dbReference type="RefSeq" id="NP_509299.1">
    <property type="nucleotide sequence ID" value="NM_076898.7"/>
</dbReference>
<dbReference type="BioGRID" id="45955">
    <property type="interactions" value="7"/>
</dbReference>
<dbReference type="FunCoup" id="Q09936">
    <property type="interactions" value="131"/>
</dbReference>
<dbReference type="STRING" id="6239.C53C9.2.2"/>
<dbReference type="iPTMnet" id="Q09936"/>
<dbReference type="PaxDb" id="6239-C53C9.2"/>
<dbReference type="PeptideAtlas" id="Q09936"/>
<dbReference type="EnsemblMetazoa" id="C53C9.2.1">
    <property type="protein sequence ID" value="C53C9.2.1"/>
    <property type="gene ID" value="WBGene00016898"/>
</dbReference>
<dbReference type="GeneID" id="181031"/>
<dbReference type="KEGG" id="cel:CELE_C53C9.2"/>
<dbReference type="UCSC" id="C53C9.2">
    <property type="organism name" value="c. elegans"/>
</dbReference>
<dbReference type="AGR" id="WB:WBGene00016898"/>
<dbReference type="CTD" id="181031"/>
<dbReference type="WormBase" id="C53C9.2">
    <property type="protein sequence ID" value="CE27882"/>
    <property type="gene ID" value="WBGene00016898"/>
    <property type="gene designation" value="clik-2"/>
</dbReference>
<dbReference type="eggNOG" id="ENOG502RPNA">
    <property type="taxonomic scope" value="Eukaryota"/>
</dbReference>
<dbReference type="HOGENOM" id="CLU_689480_0_0_1"/>
<dbReference type="InParanoid" id="Q09936"/>
<dbReference type="OMA" id="GWKKEWI"/>
<dbReference type="OrthoDB" id="21595at2759"/>
<dbReference type="PhylomeDB" id="Q09936"/>
<dbReference type="PRO" id="PR:Q09936"/>
<dbReference type="Proteomes" id="UP000001940">
    <property type="component" value="Chromosome X"/>
</dbReference>
<dbReference type="Bgee" id="WBGene00016898">
    <property type="expression patterns" value="Expressed in larva and 3 other cell types or tissues"/>
</dbReference>
<dbReference type="GO" id="GO:0015629">
    <property type="term" value="C:actin cytoskeleton"/>
    <property type="evidence" value="ECO:0000318"/>
    <property type="project" value="GO_Central"/>
</dbReference>
<dbReference type="GO" id="GO:0051015">
    <property type="term" value="F:actin filament binding"/>
    <property type="evidence" value="ECO:0000318"/>
    <property type="project" value="GO_Central"/>
</dbReference>
<dbReference type="GO" id="GO:0007015">
    <property type="term" value="P:actin filament organization"/>
    <property type="evidence" value="ECO:0000318"/>
    <property type="project" value="GO_Central"/>
</dbReference>
<dbReference type="InterPro" id="IPR050606">
    <property type="entry name" value="Calponin-like"/>
</dbReference>
<dbReference type="InterPro" id="IPR000557">
    <property type="entry name" value="Calponin_repeat"/>
</dbReference>
<dbReference type="PANTHER" id="PTHR47385">
    <property type="entry name" value="CALPONIN"/>
    <property type="match status" value="1"/>
</dbReference>
<dbReference type="PANTHER" id="PTHR47385:SF8">
    <property type="entry name" value="PROTEIN CBG16761"/>
    <property type="match status" value="1"/>
</dbReference>
<dbReference type="Pfam" id="PF00402">
    <property type="entry name" value="Calponin"/>
    <property type="match status" value="3"/>
</dbReference>
<dbReference type="PROSITE" id="PS01052">
    <property type="entry name" value="CALPONIN_1"/>
    <property type="match status" value="1"/>
</dbReference>
<dbReference type="PROSITE" id="PS51122">
    <property type="entry name" value="CALPONIN_2"/>
    <property type="match status" value="6"/>
</dbReference>
<comment type="function">
    <text evidence="4">Required for pharyngeal pumping.</text>
</comment>
<comment type="tissue specificity">
    <text evidence="3">Expressed in pharyngeal muscle cells (at protein level).</text>
</comment>
<comment type="disruption phenotype">
    <text evidence="4">Recessive lethal (PubMed:30224336). Severe defect in pharyngeal pumping (PubMed:30224336).</text>
</comment>
<comment type="similarity">
    <text evidence="5">Belongs to the calponin family.</text>
</comment>
<protein>
    <recommendedName>
        <fullName evidence="6">Calponin-like protein clik-2</fullName>
    </recommendedName>
</protein>
<keyword id="KW-0009">Actin-binding</keyword>
<keyword id="KW-1185">Reference proteome</keyword>
<keyword id="KW-0677">Repeat</keyword>
<sequence>MGEEDWSDTQQQPRKRWTLEQLKGGNTFLSQQAGTNKFETQKGMTAVGMPRWNITKDKKQGYIAPDQRSENVLRVQCGTNQYASQKGETPIGASRFQVPKVTYKKEWETILDKEGEKIIPKQAGDYGLASQAGEVSMGGHRNQVALIRGRLPHDRRTHGVLCFQNGTNLFASQTGMSAPPGLGAVRQATQKIEGLELGEDILRRGTEFTPWYSGQNKFATQAGSGGFLKVRDVLPHTVGGKDIEEELKQKSEGIVPLQSGTNKLASQRGMTGFGTPRNTQLRAGWKKEWIEDYEAALKEWEETKPPGSASSVDPFGHYKKKFEERESSRQSEIDSQSVKASEPVEPEPEEEEEEEEEEKIEEPAAKEEEEEEEEEEEEEEEELEEEEEEEEEEEEDE</sequence>
<name>CLIK2_CAEEL</name>
<gene>
    <name evidence="6" type="primary">clik-2</name>
    <name type="ORF">C53C9.2</name>
</gene>
<reference key="1">
    <citation type="journal article" date="1998" name="Science">
        <title>Genome sequence of the nematode C. elegans: a platform for investigating biology.</title>
        <authorList>
            <consortium name="The C. elegans sequencing consortium"/>
        </authorList>
    </citation>
    <scope>NUCLEOTIDE SEQUENCE [LARGE SCALE GENOMIC DNA]</scope>
    <source>
        <strain>Bristol N2</strain>
    </source>
</reference>
<reference key="2">
    <citation type="journal article" date="2015" name="Proc. Natl. Acad. Sci. U.S.A.">
        <title>Cell-specific proteomic analysis in Caenorhabditis elegans.</title>
        <authorList>
            <person name="Yuet K.P."/>
            <person name="Doma M.K."/>
            <person name="Ngo J.T."/>
            <person name="Sweredoski M.J."/>
            <person name="Graham R.L."/>
            <person name="Moradian A."/>
            <person name="Hess S."/>
            <person name="Schuman E.M."/>
            <person name="Sternberg P.W."/>
            <person name="Tirrell D.A."/>
        </authorList>
    </citation>
    <scope>TISSUE SPECIFICITY</scope>
</reference>
<reference key="3">
    <citation type="journal article" date="2018" name="G3 (Bethesda)">
        <title>An Efficient Genome Editing Strategy To Generate Putative Null Mutants in Caenorhabditis elegans Using CRISPR/Cas9.</title>
        <authorList>
            <person name="Wang H."/>
            <person name="Park H."/>
            <person name="Liu J."/>
            <person name="Sternberg P.W."/>
        </authorList>
    </citation>
    <scope>FUNCTION</scope>
    <scope>DISRUPTION PHENOTYPE</scope>
</reference>
<organism>
    <name type="scientific">Caenorhabditis elegans</name>
    <dbReference type="NCBI Taxonomy" id="6239"/>
    <lineage>
        <taxon>Eukaryota</taxon>
        <taxon>Metazoa</taxon>
        <taxon>Ecdysozoa</taxon>
        <taxon>Nematoda</taxon>
        <taxon>Chromadorea</taxon>
        <taxon>Rhabditida</taxon>
        <taxon>Rhabditina</taxon>
        <taxon>Rhabditomorpha</taxon>
        <taxon>Rhabditoidea</taxon>
        <taxon>Rhabditidae</taxon>
        <taxon>Peloderinae</taxon>
        <taxon>Caenorhabditis</taxon>
    </lineage>
</organism>
<evidence type="ECO:0000255" key="1">
    <source>
        <dbReference type="PROSITE-ProRule" id="PRU00474"/>
    </source>
</evidence>
<evidence type="ECO:0000256" key="2">
    <source>
        <dbReference type="SAM" id="MobiDB-lite"/>
    </source>
</evidence>
<evidence type="ECO:0000269" key="3">
    <source>
    </source>
</evidence>
<evidence type="ECO:0000269" key="4">
    <source>
    </source>
</evidence>
<evidence type="ECO:0000305" key="5"/>
<evidence type="ECO:0000312" key="6">
    <source>
        <dbReference type="WormBase" id="C53C9.2"/>
    </source>
</evidence>
<accession>Q09936</accession>
<proteinExistence type="evidence at protein level"/>